<organism>
    <name type="scientific">Sus scrofa</name>
    <name type="common">Pig</name>
    <dbReference type="NCBI Taxonomy" id="9823"/>
    <lineage>
        <taxon>Eukaryota</taxon>
        <taxon>Metazoa</taxon>
        <taxon>Chordata</taxon>
        <taxon>Craniata</taxon>
        <taxon>Vertebrata</taxon>
        <taxon>Euteleostomi</taxon>
        <taxon>Mammalia</taxon>
        <taxon>Eutheria</taxon>
        <taxon>Laurasiatheria</taxon>
        <taxon>Artiodactyla</taxon>
        <taxon>Suina</taxon>
        <taxon>Suidae</taxon>
        <taxon>Sus</taxon>
    </lineage>
</organism>
<reference key="1">
    <citation type="journal article" date="1996" name="Mamm. Genome">
        <title>Evaluation and characterization of a porcine small intestine cDNA library: analysis of 839 clones.</title>
        <authorList>
            <person name="Winteroe A.K."/>
            <person name="Fredholm M."/>
            <person name="Davies W."/>
        </authorList>
    </citation>
    <scope>NUCLEOTIDE SEQUENCE [LARGE SCALE MRNA]</scope>
    <source>
        <tissue>Small intestine</tissue>
    </source>
</reference>
<comment type="function">
    <text evidence="1">Plays a role in pre-mRNA splicing as a core component of the spliceosomal U1, U2, U4 and U5 small nuclear ribonucleoproteins (snRNPs), the building blocks of the spliceosome. Component of both the pre-catalytic spliceosome B complex and activated spliceosome C complexes. As a component of the minor spliceosome, involved in the splicing of U12-type introns in pre-mRNAs.</text>
</comment>
<comment type="subunit">
    <text evidence="1">Core component of the spliceosomal U1, U2, U4 and U5 small nuclear ribonucleoproteins (snRNPs), the building blocks of the spliceosome. Most spliceosomal snRNPs contain a common set of Sm proteins, SNRPB, SNRPD1, SNRPD2, SNRPD3, SNRPE, SNRPF and SNRPG that assemble in a heptameric protein ring on the Sm site of the small nuclear RNA to form the core snRNP. Component of the U1 snRNP. The U1 snRNP is composed of the U1 snRNA and the 7 core Sm proteins SNRPB, SNRPD1, SNRPD2, SNRPD3, SNRPE, SNRPF and SNRPG, and at least three U1 snRNP-specific proteins SNRNP70/U1-70K, SNRPA/U1-A and SNRPC/U1-C. Component of the U4/U6-U5 tri-snRNP complex composed of the U4, U6 and U5 snRNAs and at least PRPF3, PRPF4, PRPF6, PRPF8, PRPF31, SNRNP200, TXNL4A, SNRNP40, SNRPB, SNRPD1, SNRPD2, SNRPD3, SNRPE, SNRPF, SNRPG, DDX23, CD2BP2, PPIH, SNU13, EFTUD2, SART1 and USP39, plus LSM2, LSM3, LSM4, LSM5, LSM6, LSM7 and LSM8. Component of the minor spliceosome, which splices U12-type introns. Part of the SMN-Sm complex that contains SMN1, GEMIN2/SIP1, DDX20/GEMIN3, GEMIN4, GEMIN5, GEMIN6, GEMIN7, GEMIN8, STRAP/UNRIP and the Sm proteins SNRPB, SNRPD1, SNRPD2, SNRPD3, SNRPE, SNRPF and SNRPG; catalyzes core snRNPs assembly. Forms a 6S pICln-Sm complex composed of CLNS1A/pICln, SNRPD1, SNRPD2, SNRPE, SNRPF and SNRPG; ring-like structure where CLNS1A/pICln mimics additional Sm proteins and which is unable to assemble into the core snRNP. Interacts with SMN1; the interaction is direct. Interacts with GEMIN2; the interaction is direct. Interacts with SNRPD1; the interaction is direct. Interacts with SNRPF; the interaction is direct.</text>
</comment>
<comment type="subcellular location">
    <subcellularLocation>
        <location evidence="1">Cytoplasm</location>
        <location evidence="1">Cytosol</location>
    </subcellularLocation>
    <subcellularLocation>
        <location evidence="1">Nucleus</location>
    </subcellularLocation>
    <text evidence="1">SMN-mediated assembly into core snRNPs occurs in the cytosol before SMN-mediated transport to the nucleus to be included in spliceosomes.</text>
</comment>
<comment type="similarity">
    <text evidence="3">Belongs to the snRNP core protein family.</text>
</comment>
<evidence type="ECO:0000250" key="1">
    <source>
        <dbReference type="UniProtKB" id="P62316"/>
    </source>
</evidence>
<evidence type="ECO:0000256" key="2">
    <source>
        <dbReference type="SAM" id="MobiDB-lite"/>
    </source>
</evidence>
<evidence type="ECO:0000305" key="3"/>
<name>SMD2_PIG</name>
<accession>Q29329</accession>
<gene>
    <name type="primary">SNRPD2</name>
</gene>
<dbReference type="EMBL" id="F14730">
    <property type="protein sequence ID" value="CAA23214.1"/>
    <property type="molecule type" value="mRNA"/>
</dbReference>
<dbReference type="STRING" id="9823.ENSSSCP00000069224"/>
<dbReference type="PeptideAtlas" id="Q29329"/>
<dbReference type="InParanoid" id="Q29329"/>
<dbReference type="Proteomes" id="UP000008227">
    <property type="component" value="Unplaced"/>
</dbReference>
<dbReference type="Proteomes" id="UP000314985">
    <property type="component" value="Unplaced"/>
</dbReference>
<dbReference type="Proteomes" id="UP000694570">
    <property type="component" value="Unplaced"/>
</dbReference>
<dbReference type="Proteomes" id="UP000694571">
    <property type="component" value="Unplaced"/>
</dbReference>
<dbReference type="Proteomes" id="UP000694720">
    <property type="component" value="Unplaced"/>
</dbReference>
<dbReference type="Proteomes" id="UP000694722">
    <property type="component" value="Unplaced"/>
</dbReference>
<dbReference type="Proteomes" id="UP000694723">
    <property type="component" value="Unplaced"/>
</dbReference>
<dbReference type="Proteomes" id="UP000694724">
    <property type="component" value="Unplaced"/>
</dbReference>
<dbReference type="Proteomes" id="UP000694725">
    <property type="component" value="Unplaced"/>
</dbReference>
<dbReference type="Proteomes" id="UP000694726">
    <property type="component" value="Unplaced"/>
</dbReference>
<dbReference type="Proteomes" id="UP000694727">
    <property type="component" value="Unplaced"/>
</dbReference>
<dbReference type="Proteomes" id="UP000694728">
    <property type="component" value="Unplaced"/>
</dbReference>
<dbReference type="GO" id="GO:0005829">
    <property type="term" value="C:cytosol"/>
    <property type="evidence" value="ECO:0000250"/>
    <property type="project" value="UniProtKB"/>
</dbReference>
<dbReference type="GO" id="GO:0034709">
    <property type="term" value="C:methylosome"/>
    <property type="evidence" value="ECO:0000250"/>
    <property type="project" value="UniProtKB"/>
</dbReference>
<dbReference type="GO" id="GO:0005634">
    <property type="term" value="C:nucleus"/>
    <property type="evidence" value="ECO:0000250"/>
    <property type="project" value="UniProtKB"/>
</dbReference>
<dbReference type="GO" id="GO:0034715">
    <property type="term" value="C:pICln-Sm protein complex"/>
    <property type="evidence" value="ECO:0000250"/>
    <property type="project" value="UniProtKB"/>
</dbReference>
<dbReference type="GO" id="GO:0034719">
    <property type="term" value="C:SMN-Sm protein complex"/>
    <property type="evidence" value="ECO:0000250"/>
    <property type="project" value="UniProtKB"/>
</dbReference>
<dbReference type="GO" id="GO:0005685">
    <property type="term" value="C:U1 snRNP"/>
    <property type="evidence" value="ECO:0000250"/>
    <property type="project" value="UniProtKB"/>
</dbReference>
<dbReference type="GO" id="GO:0071007">
    <property type="term" value="C:U2-type catalytic step 2 spliceosome"/>
    <property type="evidence" value="ECO:0000250"/>
    <property type="project" value="UniProtKB"/>
</dbReference>
<dbReference type="GO" id="GO:0071005">
    <property type="term" value="C:U2-type precatalytic spliceosome"/>
    <property type="evidence" value="ECO:0000250"/>
    <property type="project" value="UniProtKB"/>
</dbReference>
<dbReference type="GO" id="GO:0005684">
    <property type="term" value="C:U2-type spliceosomal complex"/>
    <property type="evidence" value="ECO:0000250"/>
    <property type="project" value="UniProtKB"/>
</dbReference>
<dbReference type="GO" id="GO:0005687">
    <property type="term" value="C:U4 snRNP"/>
    <property type="evidence" value="ECO:0000250"/>
    <property type="project" value="UniProtKB"/>
</dbReference>
<dbReference type="GO" id="GO:0046540">
    <property type="term" value="C:U4/U6 x U5 tri-snRNP complex"/>
    <property type="evidence" value="ECO:0000250"/>
    <property type="project" value="UniProtKB"/>
</dbReference>
<dbReference type="GO" id="GO:0000398">
    <property type="term" value="P:mRNA splicing, via spliceosome"/>
    <property type="evidence" value="ECO:0000250"/>
    <property type="project" value="UniProtKB"/>
</dbReference>
<dbReference type="GO" id="GO:0000387">
    <property type="term" value="P:spliceosomal snRNP assembly"/>
    <property type="evidence" value="ECO:0000250"/>
    <property type="project" value="UniProtKB"/>
</dbReference>
<dbReference type="FunFam" id="2.30.30.100:FF:000229">
    <property type="entry name" value="Small nuclear ribonucleoprotein Sm D2"/>
    <property type="match status" value="1"/>
</dbReference>
<dbReference type="Gene3D" id="2.30.30.100">
    <property type="match status" value="1"/>
</dbReference>
<dbReference type="InterPro" id="IPR027248">
    <property type="entry name" value="Sm_D2"/>
</dbReference>
<dbReference type="PANTHER" id="PTHR12777">
    <property type="entry name" value="SMALL NUCLEAR RIBONUCLEOPROTEIN SM D2"/>
    <property type="match status" value="1"/>
</dbReference>
<sequence>MSLLNKPKSEMTPEELQKREEEEFNTGPLSVXTQSXKTXTQVLINCRNTK</sequence>
<keyword id="KW-0007">Acetylation</keyword>
<keyword id="KW-0963">Cytoplasm</keyword>
<keyword id="KW-1017">Isopeptide bond</keyword>
<keyword id="KW-0507">mRNA processing</keyword>
<keyword id="KW-0508">mRNA splicing</keyword>
<keyword id="KW-0539">Nucleus</keyword>
<keyword id="KW-0597">Phosphoprotein</keyword>
<keyword id="KW-1185">Reference proteome</keyword>
<keyword id="KW-0687">Ribonucleoprotein</keyword>
<keyword id="KW-0747">Spliceosome</keyword>
<keyword id="KW-0832">Ubl conjugation</keyword>
<feature type="initiator methionine" description="Removed" evidence="1">
    <location>
        <position position="1"/>
    </location>
</feature>
<feature type="chain" id="PRO_0000122209" description="Small nuclear ribonucleoprotein Sm D2">
    <location>
        <begin position="2"/>
        <end position="50" status="greater than"/>
    </location>
</feature>
<feature type="region of interest" description="Disordered" evidence="2">
    <location>
        <begin position="1"/>
        <end position="36"/>
    </location>
</feature>
<feature type="compositionally biased region" description="Basic and acidic residues" evidence="2">
    <location>
        <begin position="7"/>
        <end position="21"/>
    </location>
</feature>
<feature type="modified residue" description="N-acetylserine" evidence="1">
    <location>
        <position position="2"/>
    </location>
</feature>
<feature type="modified residue" description="Phosphoserine" evidence="1">
    <location>
        <position position="9"/>
    </location>
</feature>
<feature type="modified residue" description="Phosphothreonine" evidence="1">
    <location>
        <position position="12"/>
    </location>
</feature>
<feature type="cross-link" description="Glycyl lysine isopeptide (Lys-Gly) (interchain with G-Cter in SUMO2)" evidence="1">
    <location>
        <position position="6"/>
    </location>
</feature>
<feature type="cross-link" description="Glycyl lysine isopeptide (Lys-Gly) (interchain with G-Cter in SUMO2)" evidence="1">
    <location>
        <position position="8"/>
    </location>
</feature>
<feature type="non-terminal residue">
    <location>
        <position position="50"/>
    </location>
</feature>
<protein>
    <recommendedName>
        <fullName>Small nuclear ribonucleoprotein Sm D2</fullName>
        <shortName>Sm-D2</shortName>
    </recommendedName>
    <alternativeName>
        <fullName>snRNP core protein D2</fullName>
    </alternativeName>
</protein>
<proteinExistence type="evidence at transcript level"/>